<evidence type="ECO:0000250" key="1"/>
<evidence type="ECO:0000255" key="2"/>
<evidence type="ECO:0000305" key="3"/>
<reference key="1">
    <citation type="journal article" date="2002" name="Nucleic Acids Res.">
        <title>RNase 8, a novel RNase A superfamily ribonuclease expressed uniquely in placenta.</title>
        <authorList>
            <person name="Zhang J."/>
            <person name="Dyer K.D."/>
            <person name="Rosenberg H.F."/>
        </authorList>
    </citation>
    <scope>NUCLEOTIDE SEQUENCE [GENOMIC DNA]</scope>
</reference>
<dbReference type="EC" id="3.1.27.-"/>
<dbReference type="EMBL" id="AF473858">
    <property type="protein sequence ID" value="AAL89647.1"/>
    <property type="molecule type" value="Genomic_DNA"/>
</dbReference>
<dbReference type="SMR" id="Q8SPZ6"/>
<dbReference type="GO" id="GO:0005615">
    <property type="term" value="C:extracellular space"/>
    <property type="evidence" value="ECO:0007669"/>
    <property type="project" value="TreeGrafter"/>
</dbReference>
<dbReference type="GO" id="GO:0004519">
    <property type="term" value="F:endonuclease activity"/>
    <property type="evidence" value="ECO:0007669"/>
    <property type="project" value="UniProtKB-KW"/>
</dbReference>
<dbReference type="GO" id="GO:0003676">
    <property type="term" value="F:nucleic acid binding"/>
    <property type="evidence" value="ECO:0007669"/>
    <property type="project" value="InterPro"/>
</dbReference>
<dbReference type="GO" id="GO:0004540">
    <property type="term" value="F:RNA nuclease activity"/>
    <property type="evidence" value="ECO:0007669"/>
    <property type="project" value="TreeGrafter"/>
</dbReference>
<dbReference type="GO" id="GO:0050832">
    <property type="term" value="P:defense response to fungus"/>
    <property type="evidence" value="ECO:0007669"/>
    <property type="project" value="TreeGrafter"/>
</dbReference>
<dbReference type="GO" id="GO:0050829">
    <property type="term" value="P:defense response to Gram-negative bacterium"/>
    <property type="evidence" value="ECO:0007669"/>
    <property type="project" value="TreeGrafter"/>
</dbReference>
<dbReference type="GO" id="GO:0050830">
    <property type="term" value="P:defense response to Gram-positive bacterium"/>
    <property type="evidence" value="ECO:0007669"/>
    <property type="project" value="TreeGrafter"/>
</dbReference>
<dbReference type="GO" id="GO:0045087">
    <property type="term" value="P:innate immune response"/>
    <property type="evidence" value="ECO:0007669"/>
    <property type="project" value="TreeGrafter"/>
</dbReference>
<dbReference type="CDD" id="cd06265">
    <property type="entry name" value="RNase_A_canonical"/>
    <property type="match status" value="1"/>
</dbReference>
<dbReference type="FunFam" id="3.10.130.10:FF:000001">
    <property type="entry name" value="Ribonuclease pancreatic"/>
    <property type="match status" value="1"/>
</dbReference>
<dbReference type="Gene3D" id="3.10.130.10">
    <property type="entry name" value="Ribonuclease A-like domain"/>
    <property type="match status" value="1"/>
</dbReference>
<dbReference type="InterPro" id="IPR001427">
    <property type="entry name" value="RNaseA"/>
</dbReference>
<dbReference type="InterPro" id="IPR036816">
    <property type="entry name" value="RNaseA-like_dom_sf"/>
</dbReference>
<dbReference type="InterPro" id="IPR023411">
    <property type="entry name" value="RNaseA_AS"/>
</dbReference>
<dbReference type="InterPro" id="IPR023412">
    <property type="entry name" value="RNaseA_domain"/>
</dbReference>
<dbReference type="PANTHER" id="PTHR11437">
    <property type="entry name" value="RIBONUCLEASE"/>
    <property type="match status" value="1"/>
</dbReference>
<dbReference type="PANTHER" id="PTHR11437:SF25">
    <property type="entry name" value="RIBONUCLEASE 8"/>
    <property type="match status" value="1"/>
</dbReference>
<dbReference type="Pfam" id="PF00074">
    <property type="entry name" value="RnaseA"/>
    <property type="match status" value="1"/>
</dbReference>
<dbReference type="PRINTS" id="PR00794">
    <property type="entry name" value="RIBONUCLEASE"/>
</dbReference>
<dbReference type="SMART" id="SM00092">
    <property type="entry name" value="RNAse_Pc"/>
    <property type="match status" value="1"/>
</dbReference>
<dbReference type="SUPFAM" id="SSF54076">
    <property type="entry name" value="RNase A-like"/>
    <property type="match status" value="1"/>
</dbReference>
<dbReference type="PROSITE" id="PS00127">
    <property type="entry name" value="RNASE_PANCREATIC"/>
    <property type="match status" value="1"/>
</dbReference>
<protein>
    <recommendedName>
        <fullName>Ribonuclease 8</fullName>
        <shortName>RNase 8</shortName>
        <ecNumber>3.1.27.-</ecNumber>
    </recommendedName>
</protein>
<organism>
    <name type="scientific">Chlorocebus aethiops</name>
    <name type="common">Green monkey</name>
    <name type="synonym">Cercopithecus aethiops</name>
    <dbReference type="NCBI Taxonomy" id="9534"/>
    <lineage>
        <taxon>Eukaryota</taxon>
        <taxon>Metazoa</taxon>
        <taxon>Chordata</taxon>
        <taxon>Craniata</taxon>
        <taxon>Vertebrata</taxon>
        <taxon>Euteleostomi</taxon>
        <taxon>Mammalia</taxon>
        <taxon>Eutheria</taxon>
        <taxon>Euarchontoglires</taxon>
        <taxon>Primates</taxon>
        <taxon>Haplorrhini</taxon>
        <taxon>Catarrhini</taxon>
        <taxon>Cercopithecidae</taxon>
        <taxon>Cercopithecinae</taxon>
        <taxon>Chlorocebus</taxon>
    </lineage>
</organism>
<keyword id="KW-1015">Disulfide bond</keyword>
<keyword id="KW-0255">Endonuclease</keyword>
<keyword id="KW-0378">Hydrolase</keyword>
<keyword id="KW-0540">Nuclease</keyword>
<keyword id="KW-0964">Secreted</keyword>
<keyword id="KW-0732">Signal</keyword>
<accession>Q8SPZ6</accession>
<comment type="function">
    <text evidence="1">Has a low ribonuclease activity.</text>
</comment>
<comment type="subcellular location">
    <subcellularLocation>
        <location evidence="3">Secreted</location>
    </subcellularLocation>
</comment>
<comment type="similarity">
    <text evidence="3">Belongs to the pancreatic ribonuclease family.</text>
</comment>
<sequence length="154" mass="17072">MAPARAGCCPLLLLLLGLWVAQIPVSAKPKDMTSSQWFKTQHVQPSPEACYLAMSNISKYIEWCKDLNTFLHEPFSSVATTCQTPNIACKNGHKNCHQSSGPMSLTMCELTSGKYPNCRYKEKHLNAPYIVARDPPQQGDPGYPLVPVHLDKVV</sequence>
<gene>
    <name type="primary">RNASE8</name>
</gene>
<proteinExistence type="inferred from homology"/>
<feature type="signal peptide" evidence="2">
    <location>
        <begin position="1"/>
        <end position="27"/>
    </location>
</feature>
<feature type="chain" id="PRO_0000030904" description="Ribonuclease 8">
    <location>
        <begin position="28"/>
        <end position="154"/>
    </location>
</feature>
<feature type="active site" description="Proton acceptor" evidence="1">
    <location>
        <position position="42"/>
    </location>
</feature>
<feature type="active site" description="Proton donor" evidence="1">
    <location>
        <position position="149"/>
    </location>
</feature>
<feature type="binding site" evidence="1">
    <location>
        <begin position="65"/>
        <end position="69"/>
    </location>
    <ligand>
        <name>substrate</name>
    </ligand>
</feature>
<feature type="binding site" evidence="1">
    <location>
        <position position="90"/>
    </location>
    <ligand>
        <name>substrate</name>
    </ligand>
</feature>
<feature type="disulfide bond" evidence="1">
    <location>
        <begin position="64"/>
        <end position="118"/>
    </location>
</feature>
<feature type="disulfide bond" evidence="1">
    <location>
        <begin position="89"/>
        <end position="96"/>
    </location>
</feature>
<name>RNAS8_CHLAE</name>